<proteinExistence type="inferred from homology"/>
<gene>
    <name evidence="1" type="primary">mutS1</name>
    <name type="ordered locus">Mfla_0834</name>
</gene>
<gene>
    <name evidence="1" type="primary">mutS2</name>
    <name type="ordered locus">Mfla_0978</name>
</gene>
<feature type="chain" id="PRO_0000335181" description="DNA mismatch repair protein MutS">
    <location>
        <begin position="1"/>
        <end position="884"/>
    </location>
</feature>
<feature type="binding site" evidence="1">
    <location>
        <begin position="643"/>
        <end position="650"/>
    </location>
    <ligand>
        <name>ATP</name>
        <dbReference type="ChEBI" id="CHEBI:30616"/>
    </ligand>
</feature>
<protein>
    <recommendedName>
        <fullName evidence="1">DNA mismatch repair protein MutS</fullName>
    </recommendedName>
</protein>
<evidence type="ECO:0000255" key="1">
    <source>
        <dbReference type="HAMAP-Rule" id="MF_00096"/>
    </source>
</evidence>
<organism>
    <name type="scientific">Methylobacillus flagellatus (strain ATCC 51484 / DSM 6875 / VKM B-1610 / KT)</name>
    <dbReference type="NCBI Taxonomy" id="265072"/>
    <lineage>
        <taxon>Bacteria</taxon>
        <taxon>Pseudomonadati</taxon>
        <taxon>Pseudomonadota</taxon>
        <taxon>Betaproteobacteria</taxon>
        <taxon>Nitrosomonadales</taxon>
        <taxon>Methylophilaceae</taxon>
        <taxon>Methylobacillus</taxon>
    </lineage>
</organism>
<comment type="function">
    <text evidence="1">This protein is involved in the repair of mismatches in DNA. It is possible that it carries out the mismatch recognition step. This protein has a weak ATPase activity.</text>
</comment>
<comment type="similarity">
    <text evidence="1">Belongs to the DNA mismatch repair MutS family.</text>
</comment>
<name>MUTS_METFK</name>
<accession>Q1H2P1</accession>
<sequence>MHGEHDRGGVIIKVCDDVLALAGKHERAINLTKLDNTLEQHTPMMRQYLGIKAQYPDMLVFYRMGDFYELFHDDAEKASRLLGITLTKRGSSNGEPIRMAGVPYHAAEQYLAKLAKLGEAVAICEQVGDPAKSKGPVERQVTRILTPGTLTDAALLDDTRDNLLLAIAHGEGVLGLARINLASGRFILSEITPGLLAQELERISPAEILYPDDFYHMALEQVKCPKKRLAPWQFDLDSSIQTLTKQFSTYDLDGFGCAHMLAAIMAAGALLDYVKHTQRTSLPHIQSLMVEQGSQFIQLDAATRRNLEIDQTLRGESSPTLYSLLNTTVTAMGARLLRSWLHHPLQHQADIQARLQAVKVLQAQYDGLRPLLRNVGDIERMAARVALKTARPRDLSGLRDSLQQLPALQRVLRPEDSALLHSLQQQLDVPQAALDMLIAAIKDEPAAVLREGGVIADGFDAELDELRAIQSNCGEFLLQFEAQERERSGISNLKVEYNSVHGFYIEISRAQSENVPAEYRRRQTLKNVERYITPELKTFEDKVLSANERALAREKFLFDELLGNLQPALAAWQRNAEAVAQLDVLATFAERADVLKYVAPQFSSEAGLDIVDGRHPVVEQLAQPFIANSVSLSPYRQLLLITGPNMGGKSTYMRQTALIVLLAHCGCFVPAKSARIGPIDRIFTRIGASDDLAGGRSTFMVEMTETANILHNATERSLVLLDEIGRGTSTFDGLSLAWAVARQLLEKNRSYTLFATHYFELTRISEEFKHAANVHLDAVEHGDGIVFLHNVEEGPASQSYGLQVAQLAGIPRTVVNAAKRKLVQLEQSQVMQQSLAGQGDMFVAANVEPEPATHPVVSELESIDPDSLTPRQALDVLYKLKKLI</sequence>
<keyword id="KW-0067">ATP-binding</keyword>
<keyword id="KW-0227">DNA damage</keyword>
<keyword id="KW-0234">DNA repair</keyword>
<keyword id="KW-0238">DNA-binding</keyword>
<keyword id="KW-0547">Nucleotide-binding</keyword>
<keyword id="KW-1185">Reference proteome</keyword>
<dbReference type="EMBL" id="CP000284">
    <property type="protein sequence ID" value="ABE49102.1"/>
    <property type="molecule type" value="Genomic_DNA"/>
</dbReference>
<dbReference type="EMBL" id="CP000284">
    <property type="protein sequence ID" value="ABE49246.1"/>
    <property type="molecule type" value="Genomic_DNA"/>
</dbReference>
<dbReference type="SMR" id="Q1H2P1"/>
<dbReference type="STRING" id="265072.Mfla_0834"/>
<dbReference type="KEGG" id="mfa:Mfla_0834"/>
<dbReference type="KEGG" id="mfa:Mfla_0978"/>
<dbReference type="eggNOG" id="COG0249">
    <property type="taxonomic scope" value="Bacteria"/>
</dbReference>
<dbReference type="HOGENOM" id="CLU_002472_4_1_4"/>
<dbReference type="Proteomes" id="UP000002440">
    <property type="component" value="Chromosome"/>
</dbReference>
<dbReference type="GO" id="GO:0005829">
    <property type="term" value="C:cytosol"/>
    <property type="evidence" value="ECO:0007669"/>
    <property type="project" value="TreeGrafter"/>
</dbReference>
<dbReference type="GO" id="GO:0005524">
    <property type="term" value="F:ATP binding"/>
    <property type="evidence" value="ECO:0007669"/>
    <property type="project" value="UniProtKB-UniRule"/>
</dbReference>
<dbReference type="GO" id="GO:0140664">
    <property type="term" value="F:ATP-dependent DNA damage sensor activity"/>
    <property type="evidence" value="ECO:0007669"/>
    <property type="project" value="InterPro"/>
</dbReference>
<dbReference type="GO" id="GO:0003684">
    <property type="term" value="F:damaged DNA binding"/>
    <property type="evidence" value="ECO:0007669"/>
    <property type="project" value="UniProtKB-UniRule"/>
</dbReference>
<dbReference type="GO" id="GO:0030983">
    <property type="term" value="F:mismatched DNA binding"/>
    <property type="evidence" value="ECO:0007669"/>
    <property type="project" value="InterPro"/>
</dbReference>
<dbReference type="GO" id="GO:0006298">
    <property type="term" value="P:mismatch repair"/>
    <property type="evidence" value="ECO:0007669"/>
    <property type="project" value="UniProtKB-UniRule"/>
</dbReference>
<dbReference type="CDD" id="cd03284">
    <property type="entry name" value="ABC_MutS1"/>
    <property type="match status" value="1"/>
</dbReference>
<dbReference type="FunFam" id="1.10.1420.10:FF:000001">
    <property type="entry name" value="DNA mismatch repair protein MutS"/>
    <property type="match status" value="1"/>
</dbReference>
<dbReference type="FunFam" id="3.40.1170.10:FF:000001">
    <property type="entry name" value="DNA mismatch repair protein MutS"/>
    <property type="match status" value="1"/>
</dbReference>
<dbReference type="FunFam" id="3.40.50.300:FF:000283">
    <property type="entry name" value="DNA mismatch repair protein MutS"/>
    <property type="match status" value="1"/>
</dbReference>
<dbReference type="Gene3D" id="1.10.1420.10">
    <property type="match status" value="2"/>
</dbReference>
<dbReference type="Gene3D" id="6.10.140.430">
    <property type="match status" value="1"/>
</dbReference>
<dbReference type="Gene3D" id="3.40.1170.10">
    <property type="entry name" value="DNA repair protein MutS, domain I"/>
    <property type="match status" value="1"/>
</dbReference>
<dbReference type="Gene3D" id="3.30.420.110">
    <property type="entry name" value="MutS, connector domain"/>
    <property type="match status" value="1"/>
</dbReference>
<dbReference type="Gene3D" id="3.40.50.300">
    <property type="entry name" value="P-loop containing nucleotide triphosphate hydrolases"/>
    <property type="match status" value="1"/>
</dbReference>
<dbReference type="HAMAP" id="MF_00096">
    <property type="entry name" value="MutS"/>
    <property type="match status" value="1"/>
</dbReference>
<dbReference type="InterPro" id="IPR005748">
    <property type="entry name" value="DNA_mismatch_repair_MutS"/>
</dbReference>
<dbReference type="InterPro" id="IPR007695">
    <property type="entry name" value="DNA_mismatch_repair_MutS-lik_N"/>
</dbReference>
<dbReference type="InterPro" id="IPR017261">
    <property type="entry name" value="DNA_mismatch_repair_MutS/MSH"/>
</dbReference>
<dbReference type="InterPro" id="IPR000432">
    <property type="entry name" value="DNA_mismatch_repair_MutS_C"/>
</dbReference>
<dbReference type="InterPro" id="IPR007861">
    <property type="entry name" value="DNA_mismatch_repair_MutS_clamp"/>
</dbReference>
<dbReference type="InterPro" id="IPR007696">
    <property type="entry name" value="DNA_mismatch_repair_MutS_core"/>
</dbReference>
<dbReference type="InterPro" id="IPR016151">
    <property type="entry name" value="DNA_mismatch_repair_MutS_N"/>
</dbReference>
<dbReference type="InterPro" id="IPR036187">
    <property type="entry name" value="DNA_mismatch_repair_MutS_sf"/>
</dbReference>
<dbReference type="InterPro" id="IPR007860">
    <property type="entry name" value="DNA_mmatch_repair_MutS_con_dom"/>
</dbReference>
<dbReference type="InterPro" id="IPR045076">
    <property type="entry name" value="MutS"/>
</dbReference>
<dbReference type="InterPro" id="IPR036678">
    <property type="entry name" value="MutS_con_dom_sf"/>
</dbReference>
<dbReference type="InterPro" id="IPR027417">
    <property type="entry name" value="P-loop_NTPase"/>
</dbReference>
<dbReference type="NCBIfam" id="TIGR01070">
    <property type="entry name" value="mutS1"/>
    <property type="match status" value="1"/>
</dbReference>
<dbReference type="NCBIfam" id="NF003810">
    <property type="entry name" value="PRK05399.1"/>
    <property type="match status" value="1"/>
</dbReference>
<dbReference type="PANTHER" id="PTHR11361:SF34">
    <property type="entry name" value="DNA MISMATCH REPAIR PROTEIN MSH1, MITOCHONDRIAL"/>
    <property type="match status" value="1"/>
</dbReference>
<dbReference type="PANTHER" id="PTHR11361">
    <property type="entry name" value="DNA MISMATCH REPAIR PROTEIN MUTS FAMILY MEMBER"/>
    <property type="match status" value="1"/>
</dbReference>
<dbReference type="Pfam" id="PF01624">
    <property type="entry name" value="MutS_I"/>
    <property type="match status" value="1"/>
</dbReference>
<dbReference type="Pfam" id="PF05188">
    <property type="entry name" value="MutS_II"/>
    <property type="match status" value="1"/>
</dbReference>
<dbReference type="Pfam" id="PF05192">
    <property type="entry name" value="MutS_III"/>
    <property type="match status" value="1"/>
</dbReference>
<dbReference type="Pfam" id="PF05190">
    <property type="entry name" value="MutS_IV"/>
    <property type="match status" value="1"/>
</dbReference>
<dbReference type="Pfam" id="PF00488">
    <property type="entry name" value="MutS_V"/>
    <property type="match status" value="1"/>
</dbReference>
<dbReference type="PIRSF" id="PIRSF037677">
    <property type="entry name" value="DNA_mis_repair_Msh6"/>
    <property type="match status" value="1"/>
</dbReference>
<dbReference type="SMART" id="SM00534">
    <property type="entry name" value="MUTSac"/>
    <property type="match status" value="1"/>
</dbReference>
<dbReference type="SMART" id="SM00533">
    <property type="entry name" value="MUTSd"/>
    <property type="match status" value="1"/>
</dbReference>
<dbReference type="SUPFAM" id="SSF55271">
    <property type="entry name" value="DNA repair protein MutS, domain I"/>
    <property type="match status" value="1"/>
</dbReference>
<dbReference type="SUPFAM" id="SSF53150">
    <property type="entry name" value="DNA repair protein MutS, domain II"/>
    <property type="match status" value="1"/>
</dbReference>
<dbReference type="SUPFAM" id="SSF48334">
    <property type="entry name" value="DNA repair protein MutS, domain III"/>
    <property type="match status" value="1"/>
</dbReference>
<dbReference type="SUPFAM" id="SSF52540">
    <property type="entry name" value="P-loop containing nucleoside triphosphate hydrolases"/>
    <property type="match status" value="1"/>
</dbReference>
<dbReference type="PROSITE" id="PS00486">
    <property type="entry name" value="DNA_MISMATCH_REPAIR_2"/>
    <property type="match status" value="1"/>
</dbReference>
<reference key="1">
    <citation type="submission" date="2006-03" db="EMBL/GenBank/DDBJ databases">
        <title>Complete sequence of Methylobacillus flagellatus KT.</title>
        <authorList>
            <consortium name="US DOE Joint Genome Institute"/>
            <person name="Copeland A."/>
            <person name="Lucas S."/>
            <person name="Lapidus A."/>
            <person name="Barry K."/>
            <person name="Detter J.C."/>
            <person name="Glavina del Rio T."/>
            <person name="Hammon N."/>
            <person name="Israni S."/>
            <person name="Dalin E."/>
            <person name="Tice H."/>
            <person name="Pitluck S."/>
            <person name="Brettin T."/>
            <person name="Bruce D."/>
            <person name="Han C."/>
            <person name="Tapia R."/>
            <person name="Saunders E."/>
            <person name="Gilna P."/>
            <person name="Schmutz J."/>
            <person name="Larimer F."/>
            <person name="Land M."/>
            <person name="Kyrpides N."/>
            <person name="Anderson I."/>
            <person name="Richardson P."/>
        </authorList>
    </citation>
    <scope>NUCLEOTIDE SEQUENCE [LARGE SCALE GENOMIC DNA]</scope>
    <source>
        <strain>ATCC 51484 / DSM 6875 / VKM B-1610 / KT</strain>
    </source>
</reference>